<dbReference type="EC" id="2.1.1.181" evidence="1"/>
<dbReference type="EMBL" id="AE005674">
    <property type="protein sequence ID" value="AAN42392.1"/>
    <property type="status" value="ALT_INIT"/>
    <property type="molecule type" value="Genomic_DNA"/>
</dbReference>
<dbReference type="EMBL" id="AE014073">
    <property type="protein sequence ID" value="AAP16269.1"/>
    <property type="status" value="ALT_INIT"/>
    <property type="molecule type" value="Genomic_DNA"/>
</dbReference>
<dbReference type="RefSeq" id="WP_001343936.1">
    <property type="nucleotide sequence ID" value="NZ_WPGW01000128.1"/>
</dbReference>
<dbReference type="SMR" id="Q83LU4"/>
<dbReference type="STRING" id="198214.SF0758"/>
<dbReference type="PaxDb" id="198214-SF0758"/>
<dbReference type="KEGG" id="sfl:SF0758"/>
<dbReference type="KEGG" id="sfx:S0800"/>
<dbReference type="PATRIC" id="fig|198214.7.peg.882"/>
<dbReference type="HOGENOM" id="CLU_027534_3_0_6"/>
<dbReference type="Proteomes" id="UP000001006">
    <property type="component" value="Chromosome"/>
</dbReference>
<dbReference type="Proteomes" id="UP000002673">
    <property type="component" value="Chromosome"/>
</dbReference>
<dbReference type="GO" id="GO:0005737">
    <property type="term" value="C:cytoplasm"/>
    <property type="evidence" value="ECO:0007669"/>
    <property type="project" value="UniProtKB-SubCell"/>
</dbReference>
<dbReference type="GO" id="GO:0052907">
    <property type="term" value="F:23S rRNA (adenine(1618)-N(6))-methyltransferase activity"/>
    <property type="evidence" value="ECO:0007669"/>
    <property type="project" value="UniProtKB-EC"/>
</dbReference>
<dbReference type="GO" id="GO:0070475">
    <property type="term" value="P:rRNA base methylation"/>
    <property type="evidence" value="ECO:0007669"/>
    <property type="project" value="TreeGrafter"/>
</dbReference>
<dbReference type="FunFam" id="3.40.50.150:FF:000045">
    <property type="entry name" value="Ribosomal RNA large subunit methyltransferase F"/>
    <property type="match status" value="1"/>
</dbReference>
<dbReference type="Gene3D" id="3.40.50.150">
    <property type="entry name" value="Vaccinia Virus protein VP39"/>
    <property type="match status" value="1"/>
</dbReference>
<dbReference type="HAMAP" id="MF_01848">
    <property type="entry name" value="23SrRNA_methyltr_F"/>
    <property type="match status" value="1"/>
</dbReference>
<dbReference type="InterPro" id="IPR010286">
    <property type="entry name" value="METTL16/RlmF"/>
</dbReference>
<dbReference type="InterPro" id="IPR016909">
    <property type="entry name" value="rRNA_lsu_MeTfrase_F"/>
</dbReference>
<dbReference type="InterPro" id="IPR029063">
    <property type="entry name" value="SAM-dependent_MTases_sf"/>
</dbReference>
<dbReference type="NCBIfam" id="NF008725">
    <property type="entry name" value="PRK11727.1"/>
    <property type="match status" value="1"/>
</dbReference>
<dbReference type="PANTHER" id="PTHR13393:SF0">
    <property type="entry name" value="RNA N6-ADENOSINE-METHYLTRANSFERASE METTL16"/>
    <property type="match status" value="1"/>
</dbReference>
<dbReference type="PANTHER" id="PTHR13393">
    <property type="entry name" value="SAM-DEPENDENT METHYLTRANSFERASE"/>
    <property type="match status" value="1"/>
</dbReference>
<dbReference type="Pfam" id="PF05971">
    <property type="entry name" value="Methyltransf_10"/>
    <property type="match status" value="1"/>
</dbReference>
<dbReference type="PIRSF" id="PIRSF029038">
    <property type="entry name" value="Mtase_YbiN_prd"/>
    <property type="match status" value="1"/>
</dbReference>
<dbReference type="SUPFAM" id="SSF53335">
    <property type="entry name" value="S-adenosyl-L-methionine-dependent methyltransferases"/>
    <property type="match status" value="1"/>
</dbReference>
<sequence>MSAQKPGLHPRNRHHSRYDLATLCQVNPELRQFLTLTPAGEQSVDFANPLAVKALNKALLAHFYAVANWDIPDGFLCPPVPGRADYIHHLADLLAEASGTIPANASILDIGVGANCIYPLIGVHEYGWRFTGSETSSQALSSAQAIISANPGLNRAIRLRRQKESGAIFNGIIHKNEQYDATLCNPPFHDSAAAARAGSERKRRNLGLNKDDALNFGGQQQELWCEGGEVNFIKKMIEESKGFAKQVMWFTSLVSRGENLPPLYRALTDVGAVKVVKKEMAQGQKQSRFIAWTFMNDEQRRRFVNRQR</sequence>
<proteinExistence type="inferred from homology"/>
<protein>
    <recommendedName>
        <fullName evidence="1">Ribosomal RNA large subunit methyltransferase F</fullName>
        <ecNumber evidence="1">2.1.1.181</ecNumber>
    </recommendedName>
    <alternativeName>
        <fullName evidence="1">23S rRNA mA1618 methyltransferase</fullName>
    </alternativeName>
    <alternativeName>
        <fullName evidence="1">rRNA adenine N-6-methyltransferase</fullName>
    </alternativeName>
</protein>
<organism>
    <name type="scientific">Shigella flexneri</name>
    <dbReference type="NCBI Taxonomy" id="623"/>
    <lineage>
        <taxon>Bacteria</taxon>
        <taxon>Pseudomonadati</taxon>
        <taxon>Pseudomonadota</taxon>
        <taxon>Gammaproteobacteria</taxon>
        <taxon>Enterobacterales</taxon>
        <taxon>Enterobacteriaceae</taxon>
        <taxon>Shigella</taxon>
    </lineage>
</organism>
<keyword id="KW-0963">Cytoplasm</keyword>
<keyword id="KW-0489">Methyltransferase</keyword>
<keyword id="KW-1185">Reference proteome</keyword>
<keyword id="KW-0698">rRNA processing</keyword>
<keyword id="KW-0949">S-adenosyl-L-methionine</keyword>
<keyword id="KW-0808">Transferase</keyword>
<comment type="function">
    <text evidence="1">Specifically methylates the adenine in position 1618 of 23S rRNA.</text>
</comment>
<comment type="catalytic activity">
    <reaction evidence="1">
        <text>adenosine(1618) in 23S rRNA + S-adenosyl-L-methionine = N(6)-methyladenosine(1618) in 23S rRNA + S-adenosyl-L-homocysteine + H(+)</text>
        <dbReference type="Rhea" id="RHEA:16497"/>
        <dbReference type="Rhea" id="RHEA-COMP:10229"/>
        <dbReference type="Rhea" id="RHEA-COMP:10231"/>
        <dbReference type="ChEBI" id="CHEBI:15378"/>
        <dbReference type="ChEBI" id="CHEBI:57856"/>
        <dbReference type="ChEBI" id="CHEBI:59789"/>
        <dbReference type="ChEBI" id="CHEBI:74411"/>
        <dbReference type="ChEBI" id="CHEBI:74449"/>
        <dbReference type="EC" id="2.1.1.181"/>
    </reaction>
</comment>
<comment type="subcellular location">
    <subcellularLocation>
        <location evidence="1">Cytoplasm</location>
    </subcellularLocation>
</comment>
<comment type="similarity">
    <text evidence="1">Belongs to the methyltransferase superfamily. METTL16/RlmF family.</text>
</comment>
<comment type="sequence caution" evidence="2">
    <conflict type="erroneous initiation">
        <sequence resource="EMBL-CDS" id="AAN42392"/>
    </conflict>
</comment>
<comment type="sequence caution" evidence="2">
    <conflict type="erroneous initiation">
        <sequence resource="EMBL-CDS" id="AAP16269"/>
    </conflict>
</comment>
<evidence type="ECO:0000255" key="1">
    <source>
        <dbReference type="HAMAP-Rule" id="MF_01848"/>
    </source>
</evidence>
<evidence type="ECO:0000305" key="2"/>
<gene>
    <name evidence="1" type="primary">rlmF</name>
    <name type="ordered locus">SF0758</name>
    <name type="ordered locus">S0800</name>
</gene>
<name>RLMF_SHIFL</name>
<reference key="1">
    <citation type="journal article" date="2002" name="Nucleic Acids Res.">
        <title>Genome sequence of Shigella flexneri 2a: insights into pathogenicity through comparison with genomes of Escherichia coli K12 and O157.</title>
        <authorList>
            <person name="Jin Q."/>
            <person name="Yuan Z."/>
            <person name="Xu J."/>
            <person name="Wang Y."/>
            <person name="Shen Y."/>
            <person name="Lu W."/>
            <person name="Wang J."/>
            <person name="Liu H."/>
            <person name="Yang J."/>
            <person name="Yang F."/>
            <person name="Zhang X."/>
            <person name="Zhang J."/>
            <person name="Yang G."/>
            <person name="Wu H."/>
            <person name="Qu D."/>
            <person name="Dong J."/>
            <person name="Sun L."/>
            <person name="Xue Y."/>
            <person name="Zhao A."/>
            <person name="Gao Y."/>
            <person name="Zhu J."/>
            <person name="Kan B."/>
            <person name="Ding K."/>
            <person name="Chen S."/>
            <person name="Cheng H."/>
            <person name="Yao Z."/>
            <person name="He B."/>
            <person name="Chen R."/>
            <person name="Ma D."/>
            <person name="Qiang B."/>
            <person name="Wen Y."/>
            <person name="Hou Y."/>
            <person name="Yu J."/>
        </authorList>
    </citation>
    <scope>NUCLEOTIDE SEQUENCE [LARGE SCALE GENOMIC DNA]</scope>
    <source>
        <strain>301 / Serotype 2a</strain>
    </source>
</reference>
<reference key="2">
    <citation type="journal article" date="2003" name="Infect. Immun.">
        <title>Complete genome sequence and comparative genomics of Shigella flexneri serotype 2a strain 2457T.</title>
        <authorList>
            <person name="Wei J."/>
            <person name="Goldberg M.B."/>
            <person name="Burland V."/>
            <person name="Venkatesan M.M."/>
            <person name="Deng W."/>
            <person name="Fournier G."/>
            <person name="Mayhew G.F."/>
            <person name="Plunkett G. III"/>
            <person name="Rose D.J."/>
            <person name="Darling A."/>
            <person name="Mau B."/>
            <person name="Perna N.T."/>
            <person name="Payne S.M."/>
            <person name="Runyen-Janecky L.J."/>
            <person name="Zhou S."/>
            <person name="Schwartz D.C."/>
            <person name="Blattner F.R."/>
        </authorList>
    </citation>
    <scope>NUCLEOTIDE SEQUENCE [LARGE SCALE GENOMIC DNA]</scope>
    <source>
        <strain>ATCC 700930 / 2457T / Serotype 2a</strain>
    </source>
</reference>
<feature type="chain" id="PRO_0000349970" description="Ribosomal RNA large subunit methyltransferase F">
    <location>
        <begin position="1"/>
        <end position="308"/>
    </location>
</feature>
<accession>Q83LU4</accession>
<accession>Q7C2G1</accession>